<protein>
    <recommendedName>
        <fullName evidence="9">Myoglobin</fullName>
    </recommendedName>
    <alternativeName>
        <fullName evidence="1">Nitrite reductase MB</fullName>
        <ecNumber evidence="1">1.7.-.-</ecNumber>
    </alternativeName>
    <alternativeName>
        <fullName evidence="1">Pseudoperoxidase MB</fullName>
        <ecNumber evidence="1">1.11.1.-</ecNumber>
    </alternativeName>
</protein>
<sequence length="154" mass="17081">MGLSDGEWQLVLKVWGKVEADIAGHGQEVLIRLFKDHPETLEKFDKFKNLKTEDEMKASEDLKKHGSTVLGALGGILKKKGQHEAEIKPLAQSHATKHKIPVKYLEFISEAIIQVLKSKHSGDFGADAQGAMSKALELFRNDIAAKYKELGFQG</sequence>
<comment type="function">
    <text evidence="1">Monomeric heme protein which primary function is to store oxygen and facilitate its diffusion within muscle tissues. Reversibly binds oxygen through a pentacoordinated heme iron and enables its timely and efficient release as needed during periods of heightened demand. Depending on the oxidative conditions of tissues and cells, and in addition to its ability to bind oxygen, it also has a nitrite reductase activity whereby it regulates the production of bioactive nitric oxide. Under stress conditions, like hypoxia and anoxia, it also protects cells against reactive oxygen species thanks to its pseudoperoxidase activity.</text>
</comment>
<comment type="catalytic activity">
    <reaction evidence="1">
        <text>Fe(III)-heme b-[protein] + nitric oxide + H2O = Fe(II)-heme b-[protein] + nitrite + 2 H(+)</text>
        <dbReference type="Rhea" id="RHEA:77711"/>
        <dbReference type="Rhea" id="RHEA-COMP:18975"/>
        <dbReference type="Rhea" id="RHEA-COMP:18976"/>
        <dbReference type="ChEBI" id="CHEBI:15377"/>
        <dbReference type="ChEBI" id="CHEBI:15378"/>
        <dbReference type="ChEBI" id="CHEBI:16301"/>
        <dbReference type="ChEBI" id="CHEBI:16480"/>
        <dbReference type="ChEBI" id="CHEBI:55376"/>
        <dbReference type="ChEBI" id="CHEBI:60344"/>
    </reaction>
    <physiologicalReaction direction="right-to-left" evidence="1">
        <dbReference type="Rhea" id="RHEA:77713"/>
    </physiologicalReaction>
</comment>
<comment type="catalytic activity">
    <reaction evidence="1">
        <text>H2O2 + AH2 = A + 2 H2O</text>
        <dbReference type="Rhea" id="RHEA:30275"/>
        <dbReference type="ChEBI" id="CHEBI:13193"/>
        <dbReference type="ChEBI" id="CHEBI:15377"/>
        <dbReference type="ChEBI" id="CHEBI:16240"/>
        <dbReference type="ChEBI" id="CHEBI:17499"/>
    </reaction>
</comment>
<comment type="subunit">
    <text evidence="2">Monomeric.</text>
</comment>
<comment type="subcellular location">
    <subcellularLocation>
        <location evidence="1">Cytoplasm</location>
        <location evidence="1">Sarcoplasm</location>
    </subcellularLocation>
</comment>
<comment type="mass spectrometry" mass="16949.59" error="0.02" method="Electrospray" evidence="8">
    <text>Apo-myoglobin.</text>
</comment>
<comment type="similarity">
    <text evidence="7">Belongs to the globin family.</text>
</comment>
<organism>
    <name type="scientific">Sciurus vulgaris</name>
    <name type="common">Eurasian red squirrel</name>
    <dbReference type="NCBI Taxonomy" id="55149"/>
    <lineage>
        <taxon>Eukaryota</taxon>
        <taxon>Metazoa</taxon>
        <taxon>Chordata</taxon>
        <taxon>Craniata</taxon>
        <taxon>Vertebrata</taxon>
        <taxon>Euteleostomi</taxon>
        <taxon>Mammalia</taxon>
        <taxon>Eutheria</taxon>
        <taxon>Euarchontoglires</taxon>
        <taxon>Glires</taxon>
        <taxon>Rodentia</taxon>
        <taxon>Sciuromorpha</taxon>
        <taxon>Sciuridae</taxon>
        <taxon>Sciurinae</taxon>
        <taxon>Sciurini</taxon>
        <taxon>Sciurus</taxon>
    </lineage>
</organism>
<reference evidence="10" key="1">
    <citation type="journal article" date="2017" name="Biochim. Biophys. Acta">
        <title>Molecular characterization of myoglobin from Sciurus vulgaris meridionalis: Primary structure, kinetics and spectroscopic studies.</title>
        <authorList>
            <person name="Di Giuseppe A.M."/>
            <person name="Russo L."/>
            <person name="Russo R."/>
            <person name="Ragucci S."/>
            <person name="Caso J.V."/>
            <person name="Isernia C."/>
            <person name="Chambery A."/>
            <person name="Di Maro A."/>
        </authorList>
    </citation>
    <scope>PROTEIN SEQUENCE OF 2-154</scope>
    <scope>3D-STRUCTURE MODELING</scope>
    <scope>NMR</scope>
    <scope>MASS SPECTROMETRY</scope>
    <scope>IDENTIFICATION BY MASS SPECTROMETRY</scope>
    <source>
        <tissue evidence="9">Heart muscle</tissue>
        <tissue evidence="9">Skeletal muscle</tissue>
    </source>
</reference>
<dbReference type="EC" id="1.7.-.-" evidence="1"/>
<dbReference type="EC" id="1.11.1.-" evidence="1"/>
<dbReference type="SMR" id="C0HKB7"/>
<dbReference type="OrthoDB" id="6344802at2759"/>
<dbReference type="Proteomes" id="UP000694564">
    <property type="component" value="Unplaced"/>
</dbReference>
<dbReference type="GO" id="GO:0070062">
    <property type="term" value="C:extracellular exosome"/>
    <property type="evidence" value="ECO:0007669"/>
    <property type="project" value="TreeGrafter"/>
</dbReference>
<dbReference type="GO" id="GO:0016528">
    <property type="term" value="C:sarcoplasm"/>
    <property type="evidence" value="ECO:0000250"/>
    <property type="project" value="UniProtKB"/>
</dbReference>
<dbReference type="GO" id="GO:0020037">
    <property type="term" value="F:heme binding"/>
    <property type="evidence" value="ECO:0007669"/>
    <property type="project" value="InterPro"/>
</dbReference>
<dbReference type="GO" id="GO:0046872">
    <property type="term" value="F:metal ion binding"/>
    <property type="evidence" value="ECO:0007669"/>
    <property type="project" value="UniProtKB-KW"/>
</dbReference>
<dbReference type="GO" id="GO:0098809">
    <property type="term" value="F:nitrite reductase activity"/>
    <property type="evidence" value="ECO:0000250"/>
    <property type="project" value="UniProtKB"/>
</dbReference>
<dbReference type="GO" id="GO:0019825">
    <property type="term" value="F:oxygen binding"/>
    <property type="evidence" value="ECO:0007669"/>
    <property type="project" value="InterPro"/>
</dbReference>
<dbReference type="GO" id="GO:0005344">
    <property type="term" value="F:oxygen carrier activity"/>
    <property type="evidence" value="ECO:0000250"/>
    <property type="project" value="UniProtKB"/>
</dbReference>
<dbReference type="GO" id="GO:0004601">
    <property type="term" value="F:peroxidase activity"/>
    <property type="evidence" value="ECO:0000250"/>
    <property type="project" value="UniProtKB"/>
</dbReference>
<dbReference type="GO" id="GO:0019430">
    <property type="term" value="P:removal of superoxide radicals"/>
    <property type="evidence" value="ECO:0000250"/>
    <property type="project" value="UniProtKB"/>
</dbReference>
<dbReference type="CDD" id="cd08926">
    <property type="entry name" value="Mb"/>
    <property type="match status" value="1"/>
</dbReference>
<dbReference type="Gene3D" id="6.10.140.2100">
    <property type="match status" value="1"/>
</dbReference>
<dbReference type="Gene3D" id="6.10.140.2110">
    <property type="match status" value="1"/>
</dbReference>
<dbReference type="InterPro" id="IPR000971">
    <property type="entry name" value="Globin"/>
</dbReference>
<dbReference type="InterPro" id="IPR009050">
    <property type="entry name" value="Globin-like_sf"/>
</dbReference>
<dbReference type="InterPro" id="IPR002335">
    <property type="entry name" value="Myoglobin"/>
</dbReference>
<dbReference type="PANTHER" id="PTHR47132">
    <property type="entry name" value="MYOGLOBIN"/>
    <property type="match status" value="1"/>
</dbReference>
<dbReference type="PANTHER" id="PTHR47132:SF1">
    <property type="entry name" value="MYOGLOBIN"/>
    <property type="match status" value="1"/>
</dbReference>
<dbReference type="Pfam" id="PF00042">
    <property type="entry name" value="Globin"/>
    <property type="match status" value="1"/>
</dbReference>
<dbReference type="PRINTS" id="PR00613">
    <property type="entry name" value="MYOGLOBIN"/>
</dbReference>
<dbReference type="SUPFAM" id="SSF46458">
    <property type="entry name" value="Globin-like"/>
    <property type="match status" value="1"/>
</dbReference>
<dbReference type="PROSITE" id="PS01033">
    <property type="entry name" value="GLOBIN"/>
    <property type="match status" value="1"/>
</dbReference>
<evidence type="ECO:0000250" key="1">
    <source>
        <dbReference type="UniProtKB" id="P02144"/>
    </source>
</evidence>
<evidence type="ECO:0000250" key="2">
    <source>
        <dbReference type="UniProtKB" id="P02185"/>
    </source>
</evidence>
<evidence type="ECO:0000250" key="3">
    <source>
        <dbReference type="UniProtKB" id="P02189"/>
    </source>
</evidence>
<evidence type="ECO:0000250" key="4">
    <source>
        <dbReference type="UniProtKB" id="P04247"/>
    </source>
</evidence>
<evidence type="ECO:0000250" key="5">
    <source>
        <dbReference type="UniProtKB" id="P68082"/>
    </source>
</evidence>
<evidence type="ECO:0000250" key="6">
    <source>
        <dbReference type="UniProtKB" id="Q9QZ76"/>
    </source>
</evidence>
<evidence type="ECO:0000255" key="7">
    <source>
        <dbReference type="PROSITE-ProRule" id="PRU00238"/>
    </source>
</evidence>
<evidence type="ECO:0000269" key="8">
    <source>
    </source>
</evidence>
<evidence type="ECO:0000303" key="9">
    <source>
    </source>
</evidence>
<evidence type="ECO:0000305" key="10"/>
<evidence type="ECO:0000305" key="11">
    <source>
    </source>
</evidence>
<accession>C0HKB7</accession>
<proteinExistence type="evidence at protein level"/>
<feature type="initiator methionine" description="Removed" evidence="11">
    <location>
        <position position="1"/>
    </location>
</feature>
<feature type="chain" id="PRO_0000439883" description="Myoglobin" evidence="8">
    <location>
        <begin position="2"/>
        <end position="154"/>
    </location>
</feature>
<feature type="domain" description="Globin" evidence="7">
    <location>
        <begin position="2"/>
        <end position="148"/>
    </location>
</feature>
<feature type="binding site" evidence="5">
    <location>
        <position position="65"/>
    </location>
    <ligand>
        <name>nitrite</name>
        <dbReference type="ChEBI" id="CHEBI:16301"/>
    </ligand>
</feature>
<feature type="binding site" evidence="3 7">
    <location>
        <position position="65"/>
    </location>
    <ligand>
        <name>O2</name>
        <dbReference type="ChEBI" id="CHEBI:15379"/>
    </ligand>
</feature>
<feature type="binding site" description="proximal binding residue" evidence="1">
    <location>
        <position position="94"/>
    </location>
    <ligand>
        <name>heme b</name>
        <dbReference type="ChEBI" id="CHEBI:60344"/>
    </ligand>
    <ligandPart>
        <name>Fe</name>
        <dbReference type="ChEBI" id="CHEBI:18248"/>
    </ligandPart>
</feature>
<feature type="modified residue" description="Phosphoserine" evidence="6">
    <location>
        <position position="4"/>
    </location>
</feature>
<feature type="modified residue" description="Phosphothreonine" evidence="4">
    <location>
        <position position="68"/>
    </location>
</feature>
<name>MYG_SCIVU</name>
<gene>
    <name type="primary">MB</name>
</gene>
<keyword id="KW-0963">Cytoplasm</keyword>
<keyword id="KW-0903">Direct protein sequencing</keyword>
<keyword id="KW-0349">Heme</keyword>
<keyword id="KW-0408">Iron</keyword>
<keyword id="KW-0479">Metal-binding</keyword>
<keyword id="KW-0514">Muscle protein</keyword>
<keyword id="KW-0560">Oxidoreductase</keyword>
<keyword id="KW-0561">Oxygen transport</keyword>
<keyword id="KW-0597">Phosphoprotein</keyword>
<keyword id="KW-1185">Reference proteome</keyword>
<keyword id="KW-0813">Transport</keyword>